<keyword id="KW-0520">NAD</keyword>
<keyword id="KW-0560">Oxidoreductase</keyword>
<keyword id="KW-0816">Tricarboxylic acid cycle</keyword>
<proteinExistence type="inferred from homology"/>
<accession>A4SIV0</accession>
<organism>
    <name type="scientific">Aeromonas salmonicida (strain A449)</name>
    <dbReference type="NCBI Taxonomy" id="382245"/>
    <lineage>
        <taxon>Bacteria</taxon>
        <taxon>Pseudomonadati</taxon>
        <taxon>Pseudomonadota</taxon>
        <taxon>Gammaproteobacteria</taxon>
        <taxon>Aeromonadales</taxon>
        <taxon>Aeromonadaceae</taxon>
        <taxon>Aeromonas</taxon>
    </lineage>
</organism>
<evidence type="ECO:0000255" key="1">
    <source>
        <dbReference type="HAMAP-Rule" id="MF_01516"/>
    </source>
</evidence>
<name>MDH_AERS4</name>
<dbReference type="EC" id="1.1.1.37" evidence="1"/>
<dbReference type="EMBL" id="CP000644">
    <property type="protein sequence ID" value="ABO88822.1"/>
    <property type="molecule type" value="Genomic_DNA"/>
</dbReference>
<dbReference type="RefSeq" id="WP_005313534.1">
    <property type="nucleotide sequence ID" value="NC_009348.1"/>
</dbReference>
<dbReference type="SMR" id="A4SIV0"/>
<dbReference type="STRING" id="29491.GCA_000820065_01834"/>
<dbReference type="KEGG" id="asa:ASA_0659"/>
<dbReference type="eggNOG" id="COG0039">
    <property type="taxonomic scope" value="Bacteria"/>
</dbReference>
<dbReference type="HOGENOM" id="CLU_047181_0_1_6"/>
<dbReference type="Proteomes" id="UP000000225">
    <property type="component" value="Chromosome"/>
</dbReference>
<dbReference type="GO" id="GO:0005737">
    <property type="term" value="C:cytoplasm"/>
    <property type="evidence" value="ECO:0007669"/>
    <property type="project" value="TreeGrafter"/>
</dbReference>
<dbReference type="GO" id="GO:0030060">
    <property type="term" value="F:L-malate dehydrogenase (NAD+) activity"/>
    <property type="evidence" value="ECO:0007669"/>
    <property type="project" value="UniProtKB-UniRule"/>
</dbReference>
<dbReference type="GO" id="GO:0006108">
    <property type="term" value="P:malate metabolic process"/>
    <property type="evidence" value="ECO:0007669"/>
    <property type="project" value="InterPro"/>
</dbReference>
<dbReference type="GO" id="GO:0006099">
    <property type="term" value="P:tricarboxylic acid cycle"/>
    <property type="evidence" value="ECO:0007669"/>
    <property type="project" value="UniProtKB-UniRule"/>
</dbReference>
<dbReference type="CDD" id="cd01337">
    <property type="entry name" value="MDH_glyoxysomal_mitochondrial"/>
    <property type="match status" value="1"/>
</dbReference>
<dbReference type="FunFam" id="3.40.50.720:FF:000017">
    <property type="entry name" value="Malate dehydrogenase"/>
    <property type="match status" value="1"/>
</dbReference>
<dbReference type="FunFam" id="3.90.110.10:FF:000001">
    <property type="entry name" value="Malate dehydrogenase"/>
    <property type="match status" value="1"/>
</dbReference>
<dbReference type="Gene3D" id="3.90.110.10">
    <property type="entry name" value="Lactate dehydrogenase/glycoside hydrolase, family 4, C-terminal"/>
    <property type="match status" value="1"/>
</dbReference>
<dbReference type="Gene3D" id="3.40.50.720">
    <property type="entry name" value="NAD(P)-binding Rossmann-like Domain"/>
    <property type="match status" value="1"/>
</dbReference>
<dbReference type="HAMAP" id="MF_01516">
    <property type="entry name" value="Malate_dehydrog_1"/>
    <property type="match status" value="1"/>
</dbReference>
<dbReference type="InterPro" id="IPR001557">
    <property type="entry name" value="L-lactate/malate_DH"/>
</dbReference>
<dbReference type="InterPro" id="IPR022383">
    <property type="entry name" value="Lactate/malate_DH_C"/>
</dbReference>
<dbReference type="InterPro" id="IPR001236">
    <property type="entry name" value="Lactate/malate_DH_N"/>
</dbReference>
<dbReference type="InterPro" id="IPR015955">
    <property type="entry name" value="Lactate_DH/Glyco_Ohase_4_C"/>
</dbReference>
<dbReference type="InterPro" id="IPR001252">
    <property type="entry name" value="Malate_DH_AS"/>
</dbReference>
<dbReference type="InterPro" id="IPR010097">
    <property type="entry name" value="Malate_DH_type1"/>
</dbReference>
<dbReference type="InterPro" id="IPR023958">
    <property type="entry name" value="Malate_DH_type1_bac"/>
</dbReference>
<dbReference type="InterPro" id="IPR036291">
    <property type="entry name" value="NAD(P)-bd_dom_sf"/>
</dbReference>
<dbReference type="NCBIfam" id="TIGR01772">
    <property type="entry name" value="MDH_euk_gproteo"/>
    <property type="match status" value="1"/>
</dbReference>
<dbReference type="PANTHER" id="PTHR11540">
    <property type="entry name" value="MALATE AND LACTATE DEHYDROGENASE"/>
    <property type="match status" value="1"/>
</dbReference>
<dbReference type="PANTHER" id="PTHR11540:SF16">
    <property type="entry name" value="MALATE DEHYDROGENASE, MITOCHONDRIAL"/>
    <property type="match status" value="1"/>
</dbReference>
<dbReference type="Pfam" id="PF02866">
    <property type="entry name" value="Ldh_1_C"/>
    <property type="match status" value="1"/>
</dbReference>
<dbReference type="Pfam" id="PF00056">
    <property type="entry name" value="Ldh_1_N"/>
    <property type="match status" value="1"/>
</dbReference>
<dbReference type="PIRSF" id="PIRSF000102">
    <property type="entry name" value="Lac_mal_DH"/>
    <property type="match status" value="1"/>
</dbReference>
<dbReference type="SUPFAM" id="SSF56327">
    <property type="entry name" value="LDH C-terminal domain-like"/>
    <property type="match status" value="1"/>
</dbReference>
<dbReference type="SUPFAM" id="SSF51735">
    <property type="entry name" value="NAD(P)-binding Rossmann-fold domains"/>
    <property type="match status" value="1"/>
</dbReference>
<dbReference type="PROSITE" id="PS00068">
    <property type="entry name" value="MDH"/>
    <property type="match status" value="1"/>
</dbReference>
<reference key="1">
    <citation type="journal article" date="2008" name="BMC Genomics">
        <title>The genome of Aeromonas salmonicida subsp. salmonicida A449: insights into the evolution of a fish pathogen.</title>
        <authorList>
            <person name="Reith M.E."/>
            <person name="Singh R.K."/>
            <person name="Curtis B."/>
            <person name="Boyd J.M."/>
            <person name="Bouevitch A."/>
            <person name="Kimball J."/>
            <person name="Munholland J."/>
            <person name="Murphy C."/>
            <person name="Sarty D."/>
            <person name="Williams J."/>
            <person name="Nash J.H."/>
            <person name="Johnson S.C."/>
            <person name="Brown L.L."/>
        </authorList>
    </citation>
    <scope>NUCLEOTIDE SEQUENCE [LARGE SCALE GENOMIC DNA]</scope>
    <source>
        <strain>A449</strain>
    </source>
</reference>
<sequence>MKVAVLGAAGGIGQALALLLKNRLPAGSELSLYDIAPVTPGVAVDLSHIPTDVKVKGFCGEDPSPALVGADVVLISAGVARKPGMDRSDLFNINPGIVKNLVEKCAASCPKALIGIITNPVNTTVAIAAEVLKKAGVYDKRRLFGVTTLDVIRAETFVADAKGLNVDKVRVNVIGGHSGVTILPLLSQIEGASFSAEEVAAMTKRIQNAGTEVVEAKAGGGSATLSMGQAACRFGLSLIKGLQGEANVIECAYVEGDGKHATFFAQPILLGKNGVETVLDYGKLSAFEQEAMEGMLATLKADIQLGVEFVK</sequence>
<feature type="chain" id="PRO_0000294293" description="Malate dehydrogenase">
    <location>
        <begin position="1"/>
        <end position="311"/>
    </location>
</feature>
<feature type="active site" description="Proton acceptor" evidence="1">
    <location>
        <position position="177"/>
    </location>
</feature>
<feature type="binding site" evidence="1">
    <location>
        <begin position="7"/>
        <end position="13"/>
    </location>
    <ligand>
        <name>NAD(+)</name>
        <dbReference type="ChEBI" id="CHEBI:57540"/>
    </ligand>
</feature>
<feature type="binding site" evidence="1">
    <location>
        <position position="34"/>
    </location>
    <ligand>
        <name>NAD(+)</name>
        <dbReference type="ChEBI" id="CHEBI:57540"/>
    </ligand>
</feature>
<feature type="binding site" evidence="1">
    <location>
        <position position="81"/>
    </location>
    <ligand>
        <name>substrate</name>
    </ligand>
</feature>
<feature type="binding site" evidence="1">
    <location>
        <position position="87"/>
    </location>
    <ligand>
        <name>substrate</name>
    </ligand>
</feature>
<feature type="binding site" evidence="1">
    <location>
        <position position="94"/>
    </location>
    <ligand>
        <name>NAD(+)</name>
        <dbReference type="ChEBI" id="CHEBI:57540"/>
    </ligand>
</feature>
<feature type="binding site" evidence="1">
    <location>
        <begin position="117"/>
        <end position="119"/>
    </location>
    <ligand>
        <name>NAD(+)</name>
        <dbReference type="ChEBI" id="CHEBI:57540"/>
    </ligand>
</feature>
<feature type="binding site" evidence="1">
    <location>
        <position position="119"/>
    </location>
    <ligand>
        <name>substrate</name>
    </ligand>
</feature>
<feature type="binding site" evidence="1">
    <location>
        <position position="153"/>
    </location>
    <ligand>
        <name>substrate</name>
    </ligand>
</feature>
<feature type="binding site" evidence="1">
    <location>
        <position position="227"/>
    </location>
    <ligand>
        <name>NAD(+)</name>
        <dbReference type="ChEBI" id="CHEBI:57540"/>
    </ligand>
</feature>
<gene>
    <name evidence="1" type="primary">mdh</name>
    <name type="ordered locus">ASA_0659</name>
</gene>
<protein>
    <recommendedName>
        <fullName evidence="1">Malate dehydrogenase</fullName>
        <ecNumber evidence="1">1.1.1.37</ecNumber>
    </recommendedName>
</protein>
<comment type="function">
    <text evidence="1">Catalyzes the reversible oxidation of malate to oxaloacetate.</text>
</comment>
<comment type="catalytic activity">
    <reaction evidence="1">
        <text>(S)-malate + NAD(+) = oxaloacetate + NADH + H(+)</text>
        <dbReference type="Rhea" id="RHEA:21432"/>
        <dbReference type="ChEBI" id="CHEBI:15378"/>
        <dbReference type="ChEBI" id="CHEBI:15589"/>
        <dbReference type="ChEBI" id="CHEBI:16452"/>
        <dbReference type="ChEBI" id="CHEBI:57540"/>
        <dbReference type="ChEBI" id="CHEBI:57945"/>
        <dbReference type="EC" id="1.1.1.37"/>
    </reaction>
</comment>
<comment type="subunit">
    <text evidence="1">Homodimer.</text>
</comment>
<comment type="similarity">
    <text evidence="1">Belongs to the LDH/MDH superfamily. MDH type 1 family.</text>
</comment>